<evidence type="ECO:0000255" key="1">
    <source>
        <dbReference type="HAMAP-Rule" id="MF_00172"/>
    </source>
</evidence>
<accession>A4QDA4</accession>
<name>METE_CORGB</name>
<feature type="chain" id="PRO_1000017239" description="5-methyltetrahydropteroyltriglutamate--homocysteine methyltransferase">
    <location>
        <begin position="1"/>
        <end position="745"/>
    </location>
</feature>
<feature type="active site" description="Proton donor" evidence="1">
    <location>
        <position position="681"/>
    </location>
</feature>
<feature type="binding site" evidence="1">
    <location>
        <begin position="19"/>
        <end position="22"/>
    </location>
    <ligand>
        <name>5-methyltetrahydropteroyltri-L-glutamate</name>
        <dbReference type="ChEBI" id="CHEBI:58207"/>
    </ligand>
</feature>
<feature type="binding site" evidence="1">
    <location>
        <position position="119"/>
    </location>
    <ligand>
        <name>5-methyltetrahydropteroyltri-L-glutamate</name>
        <dbReference type="ChEBI" id="CHEBI:58207"/>
    </ligand>
</feature>
<feature type="binding site" evidence="1">
    <location>
        <begin position="418"/>
        <end position="420"/>
    </location>
    <ligand>
        <name>L-homocysteine</name>
        <dbReference type="ChEBI" id="CHEBI:58199"/>
    </ligand>
</feature>
<feature type="binding site" evidence="1">
    <location>
        <begin position="418"/>
        <end position="420"/>
    </location>
    <ligand>
        <name>L-methionine</name>
        <dbReference type="ChEBI" id="CHEBI:57844"/>
    </ligand>
</feature>
<feature type="binding site" evidence="1">
    <location>
        <position position="471"/>
    </location>
    <ligand>
        <name>L-homocysteine</name>
        <dbReference type="ChEBI" id="CHEBI:58199"/>
    </ligand>
</feature>
<feature type="binding site" evidence="1">
    <location>
        <position position="471"/>
    </location>
    <ligand>
        <name>L-methionine</name>
        <dbReference type="ChEBI" id="CHEBI:57844"/>
    </ligand>
</feature>
<feature type="binding site" evidence="1">
    <location>
        <begin position="502"/>
        <end position="503"/>
    </location>
    <ligand>
        <name>5-methyltetrahydropteroyltri-L-glutamate</name>
        <dbReference type="ChEBI" id="CHEBI:58207"/>
    </ligand>
</feature>
<feature type="binding site" evidence="1">
    <location>
        <position position="548"/>
    </location>
    <ligand>
        <name>5-methyltetrahydropteroyltri-L-glutamate</name>
        <dbReference type="ChEBI" id="CHEBI:58207"/>
    </ligand>
</feature>
<feature type="binding site" evidence="1">
    <location>
        <position position="586"/>
    </location>
    <ligand>
        <name>L-homocysteine</name>
        <dbReference type="ChEBI" id="CHEBI:58199"/>
    </ligand>
</feature>
<feature type="binding site" evidence="1">
    <location>
        <position position="586"/>
    </location>
    <ligand>
        <name>L-methionine</name>
        <dbReference type="ChEBI" id="CHEBI:57844"/>
    </ligand>
</feature>
<feature type="binding site" evidence="1">
    <location>
        <position position="592"/>
    </location>
    <ligand>
        <name>5-methyltetrahydropteroyltri-L-glutamate</name>
        <dbReference type="ChEBI" id="CHEBI:58207"/>
    </ligand>
</feature>
<feature type="binding site" evidence="1">
    <location>
        <position position="628"/>
    </location>
    <ligand>
        <name>Zn(2+)</name>
        <dbReference type="ChEBI" id="CHEBI:29105"/>
        <note>catalytic</note>
    </ligand>
</feature>
<feature type="binding site" evidence="1">
    <location>
        <position position="630"/>
    </location>
    <ligand>
        <name>Zn(2+)</name>
        <dbReference type="ChEBI" id="CHEBI:29105"/>
        <note>catalytic</note>
    </ligand>
</feature>
<feature type="binding site" evidence="1">
    <location>
        <position position="652"/>
    </location>
    <ligand>
        <name>Zn(2+)</name>
        <dbReference type="ChEBI" id="CHEBI:29105"/>
        <note>catalytic</note>
    </ligand>
</feature>
<feature type="binding site" evidence="1">
    <location>
        <position position="713"/>
    </location>
    <ligand>
        <name>Zn(2+)</name>
        <dbReference type="ChEBI" id="CHEBI:29105"/>
        <note>catalytic</note>
    </ligand>
</feature>
<keyword id="KW-0028">Amino-acid biosynthesis</keyword>
<keyword id="KW-0479">Metal-binding</keyword>
<keyword id="KW-0486">Methionine biosynthesis</keyword>
<keyword id="KW-0489">Methyltransferase</keyword>
<keyword id="KW-0677">Repeat</keyword>
<keyword id="KW-0808">Transferase</keyword>
<keyword id="KW-0862">Zinc</keyword>
<sequence length="745" mass="81254">MTSNFSSTVAGLPRIGAKRELKFALEGYWNGSIEGRELAQTARQLVNTASDSLSGLDSVPFAGRSYYDAMLDTAAILGVLPERFDDIADHENDGLPLWIDRYFGAARGTETLPAQAMTKWFDTNYHYLVPELSADTRFVLDASALIEDLRCQQVRGVNARPVLVGPLTFLSLARTTDGSNPLDHLPALFEVYERLIKSFDTEWVQIDEPALVTDVAPEVLEQVRAGYTTLAKRGGVFVNTYFGSGDQALNTLAGIGLGAIGVDLVTHGVTELAAWKGEELLVAGIVDGRNIWRTDLCAALASLKRLAARGPIAVSTSCSLLHVPYTLEAENIEPEVRDWLAFGSEKITEVKLLADALAGNIDAAAFDAASAAIASRRTSPRTAPITQELPGRSRGSFNTRVTLQEKSLELPALPTTTIGSFPQTPSIRSARARLRKESITLEQYEEAMREEIDLVIAKQEELGLDVLVHGEPERNDMVQYFSELLDGFLSTANGWVQSYGSRCVRPPVLFGNVSRPAPMTVKWFQYAQSLTQKHVKGMLTGPVTILAWSFVRDDQPLATTADQVALALRDEINDLIEAGAKIIQVDEPAIRELLPLRDVDKPAYLQWSVDSFRLATAGAPDDVQIHTHMCYSEFNEVISSVIALDADVTTIEAARSDMQVLAALKSSGFELGVGPGVWDIHSPRVPSAQEVDGLLEAALQSVDPRQLWVNPDCGLKTRGWPEVEASLKVLVESAKQAREKIGATI</sequence>
<reference key="1">
    <citation type="journal article" date="2007" name="Microbiology">
        <title>Comparative analysis of the Corynebacterium glutamicum group and complete genome sequence of strain R.</title>
        <authorList>
            <person name="Yukawa H."/>
            <person name="Omumasaba C.A."/>
            <person name="Nonaka H."/>
            <person name="Kos P."/>
            <person name="Okai N."/>
            <person name="Suzuki N."/>
            <person name="Suda M."/>
            <person name="Tsuge Y."/>
            <person name="Watanabe J."/>
            <person name="Ikeda Y."/>
            <person name="Vertes A.A."/>
            <person name="Inui M."/>
        </authorList>
    </citation>
    <scope>NUCLEOTIDE SEQUENCE [LARGE SCALE GENOMIC DNA]</scope>
    <source>
        <strain>R</strain>
    </source>
</reference>
<dbReference type="EC" id="2.1.1.14" evidence="1"/>
<dbReference type="EMBL" id="AP009044">
    <property type="protein sequence ID" value="BAF54201.1"/>
    <property type="molecule type" value="Genomic_DNA"/>
</dbReference>
<dbReference type="RefSeq" id="WP_003854951.1">
    <property type="nucleotide sequence ID" value="NC_009342.1"/>
</dbReference>
<dbReference type="SMR" id="A4QDA4"/>
<dbReference type="KEGG" id="cgt:cgR_1223"/>
<dbReference type="HOGENOM" id="CLU_013175_0_0_11"/>
<dbReference type="PhylomeDB" id="A4QDA4"/>
<dbReference type="UniPathway" id="UPA00051">
    <property type="reaction ID" value="UER00082"/>
</dbReference>
<dbReference type="Proteomes" id="UP000006698">
    <property type="component" value="Chromosome"/>
</dbReference>
<dbReference type="GO" id="GO:0003871">
    <property type="term" value="F:5-methyltetrahydropteroyltriglutamate-homocysteine S-methyltransferase activity"/>
    <property type="evidence" value="ECO:0007669"/>
    <property type="project" value="UniProtKB-UniRule"/>
</dbReference>
<dbReference type="GO" id="GO:0008270">
    <property type="term" value="F:zinc ion binding"/>
    <property type="evidence" value="ECO:0007669"/>
    <property type="project" value="InterPro"/>
</dbReference>
<dbReference type="GO" id="GO:0009086">
    <property type="term" value="P:methionine biosynthetic process"/>
    <property type="evidence" value="ECO:0007669"/>
    <property type="project" value="UniProtKB-UniRule"/>
</dbReference>
<dbReference type="GO" id="GO:0032259">
    <property type="term" value="P:methylation"/>
    <property type="evidence" value="ECO:0007669"/>
    <property type="project" value="UniProtKB-KW"/>
</dbReference>
<dbReference type="CDD" id="cd03311">
    <property type="entry name" value="CIMS_C_terminal_like"/>
    <property type="match status" value="1"/>
</dbReference>
<dbReference type="CDD" id="cd03312">
    <property type="entry name" value="CIMS_N_terminal_like"/>
    <property type="match status" value="1"/>
</dbReference>
<dbReference type="Gene3D" id="3.20.20.210">
    <property type="match status" value="2"/>
</dbReference>
<dbReference type="HAMAP" id="MF_00172">
    <property type="entry name" value="Meth_synth"/>
    <property type="match status" value="1"/>
</dbReference>
<dbReference type="InterPro" id="IPR013215">
    <property type="entry name" value="Cbl-indep_Met_Synth_N"/>
</dbReference>
<dbReference type="InterPro" id="IPR006276">
    <property type="entry name" value="Cobalamin-indep_Met_synthase"/>
</dbReference>
<dbReference type="InterPro" id="IPR002629">
    <property type="entry name" value="Met_Synth_C/arc"/>
</dbReference>
<dbReference type="InterPro" id="IPR038071">
    <property type="entry name" value="UROD/MetE-like_sf"/>
</dbReference>
<dbReference type="NCBIfam" id="TIGR01371">
    <property type="entry name" value="met_syn_B12ind"/>
    <property type="match status" value="1"/>
</dbReference>
<dbReference type="NCBIfam" id="NF003556">
    <property type="entry name" value="PRK05222.1"/>
    <property type="match status" value="1"/>
</dbReference>
<dbReference type="PANTHER" id="PTHR30519">
    <property type="entry name" value="5-METHYLTETRAHYDROPTEROYLTRIGLUTAMATE--HOMOCYSTEINE METHYLTRANSFERASE"/>
    <property type="match status" value="1"/>
</dbReference>
<dbReference type="Pfam" id="PF08267">
    <property type="entry name" value="Meth_synt_1"/>
    <property type="match status" value="1"/>
</dbReference>
<dbReference type="Pfam" id="PF01717">
    <property type="entry name" value="Meth_synt_2"/>
    <property type="match status" value="1"/>
</dbReference>
<dbReference type="PIRSF" id="PIRSF000382">
    <property type="entry name" value="MeTrfase_B12_ind"/>
    <property type="match status" value="1"/>
</dbReference>
<dbReference type="SUPFAM" id="SSF51726">
    <property type="entry name" value="UROD/MetE-like"/>
    <property type="match status" value="2"/>
</dbReference>
<proteinExistence type="inferred from homology"/>
<gene>
    <name evidence="1" type="primary">metE</name>
    <name type="ordered locus">cgR_1223</name>
</gene>
<comment type="function">
    <text evidence="1">Catalyzes the transfer of a methyl group from 5-methyltetrahydrofolate to homocysteine resulting in methionine formation.</text>
</comment>
<comment type="catalytic activity">
    <reaction evidence="1">
        <text>5-methyltetrahydropteroyltri-L-glutamate + L-homocysteine = tetrahydropteroyltri-L-glutamate + L-methionine</text>
        <dbReference type="Rhea" id="RHEA:21196"/>
        <dbReference type="ChEBI" id="CHEBI:57844"/>
        <dbReference type="ChEBI" id="CHEBI:58140"/>
        <dbReference type="ChEBI" id="CHEBI:58199"/>
        <dbReference type="ChEBI" id="CHEBI:58207"/>
        <dbReference type="EC" id="2.1.1.14"/>
    </reaction>
</comment>
<comment type="cofactor">
    <cofactor evidence="1">
        <name>Zn(2+)</name>
        <dbReference type="ChEBI" id="CHEBI:29105"/>
    </cofactor>
    <text evidence="1">Binds 1 zinc ion per subunit.</text>
</comment>
<comment type="pathway">
    <text evidence="1">Amino-acid biosynthesis; L-methionine biosynthesis via de novo pathway; L-methionine from L-homocysteine (MetE route): step 1/1.</text>
</comment>
<comment type="similarity">
    <text evidence="1">Belongs to the vitamin-B12 independent methionine synthase family.</text>
</comment>
<protein>
    <recommendedName>
        <fullName evidence="1">5-methyltetrahydropteroyltriglutamate--homocysteine methyltransferase</fullName>
        <ecNumber evidence="1">2.1.1.14</ecNumber>
    </recommendedName>
    <alternativeName>
        <fullName evidence="1">Cobalamin-independent methionine synthase</fullName>
    </alternativeName>
    <alternativeName>
        <fullName evidence="1">Methionine synthase, vitamin-B12 independent isozyme</fullName>
    </alternativeName>
</protein>
<organism>
    <name type="scientific">Corynebacterium glutamicum (strain R)</name>
    <dbReference type="NCBI Taxonomy" id="340322"/>
    <lineage>
        <taxon>Bacteria</taxon>
        <taxon>Bacillati</taxon>
        <taxon>Actinomycetota</taxon>
        <taxon>Actinomycetes</taxon>
        <taxon>Mycobacteriales</taxon>
        <taxon>Corynebacteriaceae</taxon>
        <taxon>Corynebacterium</taxon>
    </lineage>
</organism>